<feature type="chain" id="PRO_1000131756" description="Co-chaperone protein HscB homolog">
    <location>
        <begin position="1"/>
        <end position="174"/>
    </location>
</feature>
<feature type="domain" description="J" evidence="1">
    <location>
        <begin position="2"/>
        <end position="74"/>
    </location>
</feature>
<keyword id="KW-0143">Chaperone</keyword>
<keyword id="KW-1185">Reference proteome</keyword>
<proteinExistence type="inferred from homology"/>
<organism>
    <name type="scientific">Shewanella woodyi (strain ATCC 51908 / MS32)</name>
    <dbReference type="NCBI Taxonomy" id="392500"/>
    <lineage>
        <taxon>Bacteria</taxon>
        <taxon>Pseudomonadati</taxon>
        <taxon>Pseudomonadota</taxon>
        <taxon>Gammaproteobacteria</taxon>
        <taxon>Alteromonadales</taxon>
        <taxon>Shewanellaceae</taxon>
        <taxon>Shewanella</taxon>
    </lineage>
</organism>
<name>HSCB_SHEWM</name>
<accession>B1KNI6</accession>
<dbReference type="EMBL" id="CP000961">
    <property type="protein sequence ID" value="ACA86063.1"/>
    <property type="molecule type" value="Genomic_DNA"/>
</dbReference>
<dbReference type="RefSeq" id="WP_012324409.1">
    <property type="nucleotide sequence ID" value="NC_010506.1"/>
</dbReference>
<dbReference type="SMR" id="B1KNI6"/>
<dbReference type="STRING" id="392500.Swoo_1779"/>
<dbReference type="KEGG" id="swd:Swoo_1779"/>
<dbReference type="eggNOG" id="COG1076">
    <property type="taxonomic scope" value="Bacteria"/>
</dbReference>
<dbReference type="HOGENOM" id="CLU_068529_2_0_6"/>
<dbReference type="Proteomes" id="UP000002168">
    <property type="component" value="Chromosome"/>
</dbReference>
<dbReference type="GO" id="GO:1990230">
    <property type="term" value="C:iron-sulfur cluster transfer complex"/>
    <property type="evidence" value="ECO:0007669"/>
    <property type="project" value="TreeGrafter"/>
</dbReference>
<dbReference type="GO" id="GO:0001671">
    <property type="term" value="F:ATPase activator activity"/>
    <property type="evidence" value="ECO:0007669"/>
    <property type="project" value="InterPro"/>
</dbReference>
<dbReference type="GO" id="GO:0051087">
    <property type="term" value="F:protein-folding chaperone binding"/>
    <property type="evidence" value="ECO:0007669"/>
    <property type="project" value="InterPro"/>
</dbReference>
<dbReference type="GO" id="GO:0044571">
    <property type="term" value="P:[2Fe-2S] cluster assembly"/>
    <property type="evidence" value="ECO:0007669"/>
    <property type="project" value="InterPro"/>
</dbReference>
<dbReference type="GO" id="GO:0051259">
    <property type="term" value="P:protein complex oligomerization"/>
    <property type="evidence" value="ECO:0007669"/>
    <property type="project" value="InterPro"/>
</dbReference>
<dbReference type="GO" id="GO:0006457">
    <property type="term" value="P:protein folding"/>
    <property type="evidence" value="ECO:0007669"/>
    <property type="project" value="UniProtKB-UniRule"/>
</dbReference>
<dbReference type="CDD" id="cd06257">
    <property type="entry name" value="DnaJ"/>
    <property type="match status" value="1"/>
</dbReference>
<dbReference type="Gene3D" id="1.10.287.110">
    <property type="entry name" value="DnaJ domain"/>
    <property type="match status" value="1"/>
</dbReference>
<dbReference type="Gene3D" id="1.20.1280.20">
    <property type="entry name" value="HscB, C-terminal domain"/>
    <property type="match status" value="1"/>
</dbReference>
<dbReference type="HAMAP" id="MF_00682">
    <property type="entry name" value="HscB"/>
    <property type="match status" value="1"/>
</dbReference>
<dbReference type="InterPro" id="IPR001623">
    <property type="entry name" value="DnaJ_domain"/>
</dbReference>
<dbReference type="InterPro" id="IPR004640">
    <property type="entry name" value="HscB"/>
</dbReference>
<dbReference type="InterPro" id="IPR036386">
    <property type="entry name" value="HscB_C_sf"/>
</dbReference>
<dbReference type="InterPro" id="IPR009073">
    <property type="entry name" value="HscB_oligo_C"/>
</dbReference>
<dbReference type="InterPro" id="IPR036869">
    <property type="entry name" value="J_dom_sf"/>
</dbReference>
<dbReference type="NCBIfam" id="TIGR00714">
    <property type="entry name" value="hscB"/>
    <property type="match status" value="1"/>
</dbReference>
<dbReference type="NCBIfam" id="NF003449">
    <property type="entry name" value="PRK05014.1"/>
    <property type="match status" value="1"/>
</dbReference>
<dbReference type="PANTHER" id="PTHR14021">
    <property type="entry name" value="IRON-SULFUR CLUSTER CO-CHAPERONE PROTEIN HSCB"/>
    <property type="match status" value="1"/>
</dbReference>
<dbReference type="PANTHER" id="PTHR14021:SF15">
    <property type="entry name" value="IRON-SULFUR CLUSTER CO-CHAPERONE PROTEIN HSCB"/>
    <property type="match status" value="1"/>
</dbReference>
<dbReference type="Pfam" id="PF07743">
    <property type="entry name" value="HSCB_C"/>
    <property type="match status" value="1"/>
</dbReference>
<dbReference type="SMART" id="SM00271">
    <property type="entry name" value="DnaJ"/>
    <property type="match status" value="1"/>
</dbReference>
<dbReference type="SUPFAM" id="SSF46565">
    <property type="entry name" value="Chaperone J-domain"/>
    <property type="match status" value="1"/>
</dbReference>
<dbReference type="SUPFAM" id="SSF47144">
    <property type="entry name" value="HSC20 (HSCB), C-terminal oligomerisation domain"/>
    <property type="match status" value="1"/>
</dbReference>
<dbReference type="PROSITE" id="PS50076">
    <property type="entry name" value="DNAJ_2"/>
    <property type="match status" value="1"/>
</dbReference>
<reference key="1">
    <citation type="submission" date="2008-02" db="EMBL/GenBank/DDBJ databases">
        <title>Complete sequence of Shewanella woodyi ATCC 51908.</title>
        <authorList>
            <consortium name="US DOE Joint Genome Institute"/>
            <person name="Copeland A."/>
            <person name="Lucas S."/>
            <person name="Lapidus A."/>
            <person name="Glavina del Rio T."/>
            <person name="Dalin E."/>
            <person name="Tice H."/>
            <person name="Bruce D."/>
            <person name="Goodwin L."/>
            <person name="Pitluck S."/>
            <person name="Sims D."/>
            <person name="Brettin T."/>
            <person name="Detter J.C."/>
            <person name="Han C."/>
            <person name="Kuske C.R."/>
            <person name="Schmutz J."/>
            <person name="Larimer F."/>
            <person name="Land M."/>
            <person name="Hauser L."/>
            <person name="Kyrpides N."/>
            <person name="Lykidis A."/>
            <person name="Zhao J.-S."/>
            <person name="Richardson P."/>
        </authorList>
    </citation>
    <scope>NUCLEOTIDE SEQUENCE [LARGE SCALE GENOMIC DNA]</scope>
    <source>
        <strain>ATCC 51908 / MS32</strain>
    </source>
</reference>
<comment type="function">
    <text evidence="1">Co-chaperone involved in the maturation of iron-sulfur cluster-containing proteins. Seems to help targeting proteins to be folded toward HscA.</text>
</comment>
<comment type="subunit">
    <text evidence="1">Interacts with HscA and stimulates its ATPase activity.</text>
</comment>
<comment type="similarity">
    <text evidence="1">Belongs to the HscB family.</text>
</comment>
<gene>
    <name evidence="1" type="primary">hscB</name>
    <name type="ordered locus">Swoo_1779</name>
</gene>
<protein>
    <recommendedName>
        <fullName evidence="1">Co-chaperone protein HscB homolog</fullName>
    </recommendedName>
</protein>
<sequence length="174" mass="19992">MNYFELFSFTPTYQIDTALLAERYRELQRAVHPDKFANASEQDKRIAVQRTAQVNDGFSTLKDPILRAEHMLSLNGIDLKHESTTVKDTLFLMQQMEWRESLEDISDSSDPDTAISDLHESFSDYAKQIAEELSGLLSSTNEAELIQAADLIRKLKFMAKLQIELERIEDALFE</sequence>
<evidence type="ECO:0000255" key="1">
    <source>
        <dbReference type="HAMAP-Rule" id="MF_00682"/>
    </source>
</evidence>